<organism>
    <name type="scientific">Dehalococcoides mccartyi (strain ATCC BAA-2266 / KCTC 15142 / 195)</name>
    <name type="common">Dehalococcoides ethenogenes (strain 195)</name>
    <dbReference type="NCBI Taxonomy" id="243164"/>
    <lineage>
        <taxon>Bacteria</taxon>
        <taxon>Bacillati</taxon>
        <taxon>Chloroflexota</taxon>
        <taxon>Dehalococcoidia</taxon>
        <taxon>Dehalococcoidales</taxon>
        <taxon>Dehalococcoidaceae</taxon>
        <taxon>Dehalococcoides</taxon>
    </lineage>
</organism>
<protein>
    <recommendedName>
        <fullName evidence="1">Threonine--tRNA ligase</fullName>
        <ecNumber evidence="1">6.1.1.3</ecNumber>
    </recommendedName>
    <alternativeName>
        <fullName evidence="1">Threonyl-tRNA synthetase</fullName>
        <shortName evidence="1">ThrRS</shortName>
    </alternativeName>
</protein>
<evidence type="ECO:0000255" key="1">
    <source>
        <dbReference type="HAMAP-Rule" id="MF_00184"/>
    </source>
</evidence>
<keyword id="KW-0030">Aminoacyl-tRNA synthetase</keyword>
<keyword id="KW-0067">ATP-binding</keyword>
<keyword id="KW-0963">Cytoplasm</keyword>
<keyword id="KW-0436">Ligase</keyword>
<keyword id="KW-0479">Metal-binding</keyword>
<keyword id="KW-0547">Nucleotide-binding</keyword>
<keyword id="KW-0648">Protein biosynthesis</keyword>
<keyword id="KW-0694">RNA-binding</keyword>
<keyword id="KW-0820">tRNA-binding</keyword>
<keyword id="KW-0862">Zinc</keyword>
<gene>
    <name evidence="1" type="primary">thrS</name>
    <name type="ordered locus">DET0753</name>
</gene>
<sequence length="582" mass="67071">MANQIDEAKPISDLEIMRHSAAHIMAEAVLSMFPEAKLGIGPAIDTGFYYDFDLPRTLTPEDLPEIETRMNQLVKANLPFRREEMSKDEARKLFADQPYKLELLDDIPDEIVSVYRQGNLCDLCRGPHVNYTSKVKAFKLLSIAGAYWRGDEKRPMLQRIYGAAFLDKASLAEYLNMLEESAKRDHRKLGKELELFSLHQEIGGGLVNWLPNGAIVRHLIEEFWKKEHLKRGYSLVYTPHIAKVDLWKTSGHWGFYRENMYSPMDIDGEEYVLKPMNCVYHILMFKNRTRSYKELPIRMAELGTVYRYERSGVLHGLSRVRGFTQDDAHIFCLYEQLEKEVVKVLDLAKFMIDTFGFTRYKVMLSTRPEKYVGELDKWEYATDILAKALESNQIAYQVDPGEGVFYGPKIDIKFEDALGRAWQGPTIQVDFQLPERFDVSVVGEDGKDQPVAMVHRTVLGSMERFMSCLTEQYGGAFPVWLSPKQVMLIPIADRHSEFAEKLACELREEEVRVEVDNRSETMNQKIRQAQLAKIPYMLVVGDKEIETQSVSIRTRSGSQCVMPFAEFKSMLIDKIKTKSTEI</sequence>
<reference key="1">
    <citation type="journal article" date="2005" name="Science">
        <title>Genome sequence of the PCE-dechlorinating bacterium Dehalococcoides ethenogenes.</title>
        <authorList>
            <person name="Seshadri R."/>
            <person name="Adrian L."/>
            <person name="Fouts D.E."/>
            <person name="Eisen J.A."/>
            <person name="Phillippy A.M."/>
            <person name="Methe B.A."/>
            <person name="Ward N.L."/>
            <person name="Nelson W.C."/>
            <person name="DeBoy R.T."/>
            <person name="Khouri H.M."/>
            <person name="Kolonay J.F."/>
            <person name="Dodson R.J."/>
            <person name="Daugherty S.C."/>
            <person name="Brinkac L.M."/>
            <person name="Sullivan S.A."/>
            <person name="Madupu R."/>
            <person name="Nelson K.E."/>
            <person name="Kang K.H."/>
            <person name="Impraim M."/>
            <person name="Tran K."/>
            <person name="Robinson J.M."/>
            <person name="Forberger H.A."/>
            <person name="Fraser C.M."/>
            <person name="Zinder S.H."/>
            <person name="Heidelberg J.F."/>
        </authorList>
    </citation>
    <scope>NUCLEOTIDE SEQUENCE [LARGE SCALE GENOMIC DNA]</scope>
    <source>
        <strain>ATCC BAA-2266 / KCTC 15142 / 195</strain>
    </source>
</reference>
<feature type="chain" id="PRO_1000020379" description="Threonine--tRNA ligase">
    <location>
        <begin position="1"/>
        <end position="582"/>
    </location>
</feature>
<feature type="region of interest" description="Catalytic" evidence="1">
    <location>
        <begin position="185"/>
        <end position="478"/>
    </location>
</feature>
<feature type="binding site" evidence="1">
    <location>
        <position position="278"/>
    </location>
    <ligand>
        <name>Zn(2+)</name>
        <dbReference type="ChEBI" id="CHEBI:29105"/>
    </ligand>
</feature>
<feature type="binding site" evidence="1">
    <location>
        <position position="329"/>
    </location>
    <ligand>
        <name>Zn(2+)</name>
        <dbReference type="ChEBI" id="CHEBI:29105"/>
    </ligand>
</feature>
<feature type="binding site" evidence="1">
    <location>
        <position position="455"/>
    </location>
    <ligand>
        <name>Zn(2+)</name>
        <dbReference type="ChEBI" id="CHEBI:29105"/>
    </ligand>
</feature>
<accession>Q3Z8G2</accession>
<proteinExistence type="inferred from homology"/>
<dbReference type="EC" id="6.1.1.3" evidence="1"/>
<dbReference type="EMBL" id="CP000027">
    <property type="protein sequence ID" value="AAW39977.1"/>
    <property type="molecule type" value="Genomic_DNA"/>
</dbReference>
<dbReference type="RefSeq" id="WP_010936488.1">
    <property type="nucleotide sequence ID" value="NC_002936.3"/>
</dbReference>
<dbReference type="SMR" id="Q3Z8G2"/>
<dbReference type="FunCoup" id="Q3Z8G2">
    <property type="interactions" value="363"/>
</dbReference>
<dbReference type="STRING" id="243164.DET0753"/>
<dbReference type="GeneID" id="3229939"/>
<dbReference type="KEGG" id="det:DET0753"/>
<dbReference type="PATRIC" id="fig|243164.10.peg.719"/>
<dbReference type="eggNOG" id="COG0441">
    <property type="taxonomic scope" value="Bacteria"/>
</dbReference>
<dbReference type="HOGENOM" id="CLU_008554_0_1_0"/>
<dbReference type="InParanoid" id="Q3Z8G2"/>
<dbReference type="Proteomes" id="UP000008289">
    <property type="component" value="Chromosome"/>
</dbReference>
<dbReference type="GO" id="GO:0005737">
    <property type="term" value="C:cytoplasm"/>
    <property type="evidence" value="ECO:0007669"/>
    <property type="project" value="UniProtKB-SubCell"/>
</dbReference>
<dbReference type="GO" id="GO:0005524">
    <property type="term" value="F:ATP binding"/>
    <property type="evidence" value="ECO:0007669"/>
    <property type="project" value="UniProtKB-UniRule"/>
</dbReference>
<dbReference type="GO" id="GO:0046872">
    <property type="term" value="F:metal ion binding"/>
    <property type="evidence" value="ECO:0007669"/>
    <property type="project" value="UniProtKB-KW"/>
</dbReference>
<dbReference type="GO" id="GO:0004829">
    <property type="term" value="F:threonine-tRNA ligase activity"/>
    <property type="evidence" value="ECO:0007669"/>
    <property type="project" value="UniProtKB-UniRule"/>
</dbReference>
<dbReference type="GO" id="GO:0000049">
    <property type="term" value="F:tRNA binding"/>
    <property type="evidence" value="ECO:0007669"/>
    <property type="project" value="UniProtKB-KW"/>
</dbReference>
<dbReference type="GO" id="GO:0006435">
    <property type="term" value="P:threonyl-tRNA aminoacylation"/>
    <property type="evidence" value="ECO:0007669"/>
    <property type="project" value="UniProtKB-UniRule"/>
</dbReference>
<dbReference type="CDD" id="cd00860">
    <property type="entry name" value="ThrRS_anticodon"/>
    <property type="match status" value="1"/>
</dbReference>
<dbReference type="CDD" id="cd00771">
    <property type="entry name" value="ThrRS_core"/>
    <property type="match status" value="1"/>
</dbReference>
<dbReference type="FunFam" id="3.30.54.20:FF:000002">
    <property type="entry name" value="Threonine--tRNA ligase"/>
    <property type="match status" value="1"/>
</dbReference>
<dbReference type="FunFam" id="3.30.930.10:FF:000002">
    <property type="entry name" value="Threonine--tRNA ligase"/>
    <property type="match status" value="1"/>
</dbReference>
<dbReference type="FunFam" id="3.40.50.800:FF:000001">
    <property type="entry name" value="Threonine--tRNA ligase"/>
    <property type="match status" value="1"/>
</dbReference>
<dbReference type="FunFam" id="3.30.980.10:FF:000005">
    <property type="entry name" value="Threonyl-tRNA synthetase, mitochondrial"/>
    <property type="match status" value="1"/>
</dbReference>
<dbReference type="Gene3D" id="3.30.54.20">
    <property type="match status" value="1"/>
</dbReference>
<dbReference type="Gene3D" id="3.40.50.800">
    <property type="entry name" value="Anticodon-binding domain"/>
    <property type="match status" value="1"/>
</dbReference>
<dbReference type="Gene3D" id="3.30.930.10">
    <property type="entry name" value="Bira Bifunctional Protein, Domain 2"/>
    <property type="match status" value="1"/>
</dbReference>
<dbReference type="Gene3D" id="3.30.980.10">
    <property type="entry name" value="Threonyl-trna Synthetase, Chain A, domain 2"/>
    <property type="match status" value="1"/>
</dbReference>
<dbReference type="HAMAP" id="MF_00184">
    <property type="entry name" value="Thr_tRNA_synth"/>
    <property type="match status" value="1"/>
</dbReference>
<dbReference type="InterPro" id="IPR002314">
    <property type="entry name" value="aa-tRNA-synt_IIb"/>
</dbReference>
<dbReference type="InterPro" id="IPR006195">
    <property type="entry name" value="aa-tRNA-synth_II"/>
</dbReference>
<dbReference type="InterPro" id="IPR045864">
    <property type="entry name" value="aa-tRNA-synth_II/BPL/LPL"/>
</dbReference>
<dbReference type="InterPro" id="IPR004154">
    <property type="entry name" value="Anticodon-bd"/>
</dbReference>
<dbReference type="InterPro" id="IPR036621">
    <property type="entry name" value="Anticodon-bd_dom_sf"/>
</dbReference>
<dbReference type="InterPro" id="IPR002320">
    <property type="entry name" value="Thr-tRNA-ligase_IIa"/>
</dbReference>
<dbReference type="InterPro" id="IPR018163">
    <property type="entry name" value="Thr/Ala-tRNA-synth_IIc_edit"/>
</dbReference>
<dbReference type="InterPro" id="IPR047246">
    <property type="entry name" value="ThrRS_anticodon"/>
</dbReference>
<dbReference type="InterPro" id="IPR033728">
    <property type="entry name" value="ThrRS_core"/>
</dbReference>
<dbReference type="InterPro" id="IPR012947">
    <property type="entry name" value="tRNA_SAD"/>
</dbReference>
<dbReference type="NCBIfam" id="TIGR00418">
    <property type="entry name" value="thrS"/>
    <property type="match status" value="1"/>
</dbReference>
<dbReference type="PANTHER" id="PTHR11451:SF44">
    <property type="entry name" value="THREONINE--TRNA LIGASE, CHLOROPLASTIC_MITOCHONDRIAL 2"/>
    <property type="match status" value="1"/>
</dbReference>
<dbReference type="PANTHER" id="PTHR11451">
    <property type="entry name" value="THREONINE-TRNA LIGASE"/>
    <property type="match status" value="1"/>
</dbReference>
<dbReference type="Pfam" id="PF03129">
    <property type="entry name" value="HGTP_anticodon"/>
    <property type="match status" value="1"/>
</dbReference>
<dbReference type="Pfam" id="PF00587">
    <property type="entry name" value="tRNA-synt_2b"/>
    <property type="match status" value="1"/>
</dbReference>
<dbReference type="Pfam" id="PF07973">
    <property type="entry name" value="tRNA_SAD"/>
    <property type="match status" value="1"/>
</dbReference>
<dbReference type="PRINTS" id="PR01047">
    <property type="entry name" value="TRNASYNTHTHR"/>
</dbReference>
<dbReference type="SMART" id="SM00863">
    <property type="entry name" value="tRNA_SAD"/>
    <property type="match status" value="1"/>
</dbReference>
<dbReference type="SUPFAM" id="SSF52954">
    <property type="entry name" value="Class II aaRS ABD-related"/>
    <property type="match status" value="1"/>
</dbReference>
<dbReference type="SUPFAM" id="SSF55681">
    <property type="entry name" value="Class II aaRS and biotin synthetases"/>
    <property type="match status" value="1"/>
</dbReference>
<dbReference type="SUPFAM" id="SSF55186">
    <property type="entry name" value="ThrRS/AlaRS common domain"/>
    <property type="match status" value="1"/>
</dbReference>
<dbReference type="PROSITE" id="PS50862">
    <property type="entry name" value="AA_TRNA_LIGASE_II"/>
    <property type="match status" value="1"/>
</dbReference>
<comment type="function">
    <text evidence="1">Catalyzes the attachment of threonine to tRNA(Thr) in a two-step reaction: L-threonine is first activated by ATP to form Thr-AMP and then transferred to the acceptor end of tRNA(Thr). Also edits incorrectly charged L-seryl-tRNA(Thr).</text>
</comment>
<comment type="catalytic activity">
    <reaction evidence="1">
        <text>tRNA(Thr) + L-threonine + ATP = L-threonyl-tRNA(Thr) + AMP + diphosphate + H(+)</text>
        <dbReference type="Rhea" id="RHEA:24624"/>
        <dbReference type="Rhea" id="RHEA-COMP:9670"/>
        <dbReference type="Rhea" id="RHEA-COMP:9704"/>
        <dbReference type="ChEBI" id="CHEBI:15378"/>
        <dbReference type="ChEBI" id="CHEBI:30616"/>
        <dbReference type="ChEBI" id="CHEBI:33019"/>
        <dbReference type="ChEBI" id="CHEBI:57926"/>
        <dbReference type="ChEBI" id="CHEBI:78442"/>
        <dbReference type="ChEBI" id="CHEBI:78534"/>
        <dbReference type="ChEBI" id="CHEBI:456215"/>
        <dbReference type="EC" id="6.1.1.3"/>
    </reaction>
</comment>
<comment type="cofactor">
    <cofactor evidence="1">
        <name>Zn(2+)</name>
        <dbReference type="ChEBI" id="CHEBI:29105"/>
    </cofactor>
    <text evidence="1">Binds 1 zinc ion per subunit.</text>
</comment>
<comment type="subunit">
    <text evidence="1">Homodimer.</text>
</comment>
<comment type="subcellular location">
    <subcellularLocation>
        <location evidence="1">Cytoplasm</location>
    </subcellularLocation>
</comment>
<comment type="similarity">
    <text evidence="1">Belongs to the class-II aminoacyl-tRNA synthetase family.</text>
</comment>
<name>SYT_DEHM1</name>